<accession>B1MX63</accession>
<keyword id="KW-0460">Magnesium</keyword>
<keyword id="KW-0479">Metal-binding</keyword>
<keyword id="KW-1185">Reference proteome</keyword>
<keyword id="KW-0784">Thiamine biosynthesis</keyword>
<keyword id="KW-0808">Transferase</keyword>
<evidence type="ECO:0000255" key="1">
    <source>
        <dbReference type="HAMAP-Rule" id="MF_00097"/>
    </source>
</evidence>
<feature type="chain" id="PRO_1000093677" description="Thiamine-phosphate synthase">
    <location>
        <begin position="1"/>
        <end position="212"/>
    </location>
</feature>
<feature type="binding site" evidence="1">
    <location>
        <begin position="41"/>
        <end position="45"/>
    </location>
    <ligand>
        <name>4-amino-2-methyl-5-(diphosphooxymethyl)pyrimidine</name>
        <dbReference type="ChEBI" id="CHEBI:57841"/>
    </ligand>
</feature>
<feature type="binding site" evidence="1">
    <location>
        <position position="76"/>
    </location>
    <ligand>
        <name>4-amino-2-methyl-5-(diphosphooxymethyl)pyrimidine</name>
        <dbReference type="ChEBI" id="CHEBI:57841"/>
    </ligand>
</feature>
<feature type="binding site" evidence="1">
    <location>
        <position position="77"/>
    </location>
    <ligand>
        <name>Mg(2+)</name>
        <dbReference type="ChEBI" id="CHEBI:18420"/>
    </ligand>
</feature>
<feature type="binding site" evidence="1">
    <location>
        <position position="96"/>
    </location>
    <ligand>
        <name>Mg(2+)</name>
        <dbReference type="ChEBI" id="CHEBI:18420"/>
    </ligand>
</feature>
<feature type="binding site" evidence="1">
    <location>
        <position position="114"/>
    </location>
    <ligand>
        <name>4-amino-2-methyl-5-(diphosphooxymethyl)pyrimidine</name>
        <dbReference type="ChEBI" id="CHEBI:57841"/>
    </ligand>
</feature>
<feature type="binding site" evidence="1">
    <location>
        <begin position="141"/>
        <end position="143"/>
    </location>
    <ligand>
        <name>2-[(2R,5Z)-2-carboxy-4-methylthiazol-5(2H)-ylidene]ethyl phosphate</name>
        <dbReference type="ChEBI" id="CHEBI:62899"/>
    </ligand>
</feature>
<feature type="binding site" evidence="1">
    <location>
        <position position="144"/>
    </location>
    <ligand>
        <name>4-amino-2-methyl-5-(diphosphooxymethyl)pyrimidine</name>
        <dbReference type="ChEBI" id="CHEBI:57841"/>
    </ligand>
</feature>
<feature type="binding site" evidence="1">
    <location>
        <position position="172"/>
    </location>
    <ligand>
        <name>2-[(2R,5Z)-2-carboxy-4-methylthiazol-5(2H)-ylidene]ethyl phosphate</name>
        <dbReference type="ChEBI" id="CHEBI:62899"/>
    </ligand>
</feature>
<feature type="binding site" evidence="1">
    <location>
        <begin position="192"/>
        <end position="193"/>
    </location>
    <ligand>
        <name>2-[(2R,5Z)-2-carboxy-4-methylthiazol-5(2H)-ylidene]ethyl phosphate</name>
        <dbReference type="ChEBI" id="CHEBI:62899"/>
    </ligand>
</feature>
<reference key="1">
    <citation type="journal article" date="2008" name="J. Bacteriol.">
        <title>Complete genome sequence of Leuconostoc citreum KM20.</title>
        <authorList>
            <person name="Kim J.F."/>
            <person name="Jeong H."/>
            <person name="Lee J.-S."/>
            <person name="Choi S.-H."/>
            <person name="Ha M."/>
            <person name="Hur C.-G."/>
            <person name="Kim J.-S."/>
            <person name="Lee S."/>
            <person name="Park H.-S."/>
            <person name="Park Y.-H."/>
            <person name="Oh T.K."/>
        </authorList>
    </citation>
    <scope>NUCLEOTIDE SEQUENCE [LARGE SCALE GENOMIC DNA]</scope>
    <source>
        <strain>KM20</strain>
    </source>
</reference>
<gene>
    <name evidence="1" type="primary">thiE</name>
    <name type="ordered locus">LCK_00282</name>
</gene>
<name>THIE_LEUCK</name>
<protein>
    <recommendedName>
        <fullName evidence="1">Thiamine-phosphate synthase</fullName>
        <shortName evidence="1">TP synthase</shortName>
        <shortName evidence="1">TPS</shortName>
        <ecNumber evidence="1">2.5.1.3</ecNumber>
    </recommendedName>
    <alternativeName>
        <fullName evidence="1">Thiamine-phosphate pyrophosphorylase</fullName>
        <shortName evidence="1">TMP pyrophosphorylase</shortName>
        <shortName evidence="1">TMP-PPase</shortName>
    </alternativeName>
</protein>
<organism>
    <name type="scientific">Leuconostoc citreum (strain KM20)</name>
    <dbReference type="NCBI Taxonomy" id="349519"/>
    <lineage>
        <taxon>Bacteria</taxon>
        <taxon>Bacillati</taxon>
        <taxon>Bacillota</taxon>
        <taxon>Bacilli</taxon>
        <taxon>Lactobacillales</taxon>
        <taxon>Lactobacillaceae</taxon>
        <taxon>Leuconostoc</taxon>
    </lineage>
</organism>
<dbReference type="EC" id="2.5.1.3" evidence="1"/>
<dbReference type="EMBL" id="DQ489736">
    <property type="protein sequence ID" value="ACA82115.1"/>
    <property type="molecule type" value="Genomic_DNA"/>
</dbReference>
<dbReference type="RefSeq" id="WP_004907482.1">
    <property type="nucleotide sequence ID" value="NC_010471.1"/>
</dbReference>
<dbReference type="SMR" id="B1MX63"/>
<dbReference type="STRING" id="349519.LCK_00282"/>
<dbReference type="KEGG" id="lci:LCK_00282"/>
<dbReference type="eggNOG" id="COG0352">
    <property type="taxonomic scope" value="Bacteria"/>
</dbReference>
<dbReference type="HOGENOM" id="CLU_018272_3_2_9"/>
<dbReference type="OrthoDB" id="9812206at2"/>
<dbReference type="UniPathway" id="UPA00060">
    <property type="reaction ID" value="UER00141"/>
</dbReference>
<dbReference type="Proteomes" id="UP000002166">
    <property type="component" value="Chromosome"/>
</dbReference>
<dbReference type="GO" id="GO:0005737">
    <property type="term" value="C:cytoplasm"/>
    <property type="evidence" value="ECO:0007669"/>
    <property type="project" value="TreeGrafter"/>
</dbReference>
<dbReference type="GO" id="GO:0000287">
    <property type="term" value="F:magnesium ion binding"/>
    <property type="evidence" value="ECO:0007669"/>
    <property type="project" value="UniProtKB-UniRule"/>
</dbReference>
<dbReference type="GO" id="GO:0004789">
    <property type="term" value="F:thiamine-phosphate diphosphorylase activity"/>
    <property type="evidence" value="ECO:0007669"/>
    <property type="project" value="UniProtKB-UniRule"/>
</dbReference>
<dbReference type="GO" id="GO:0009228">
    <property type="term" value="P:thiamine biosynthetic process"/>
    <property type="evidence" value="ECO:0007669"/>
    <property type="project" value="UniProtKB-KW"/>
</dbReference>
<dbReference type="GO" id="GO:0009229">
    <property type="term" value="P:thiamine diphosphate biosynthetic process"/>
    <property type="evidence" value="ECO:0007669"/>
    <property type="project" value="UniProtKB-UniRule"/>
</dbReference>
<dbReference type="CDD" id="cd00564">
    <property type="entry name" value="TMP_TenI"/>
    <property type="match status" value="1"/>
</dbReference>
<dbReference type="FunFam" id="3.20.20.70:FF:000096">
    <property type="entry name" value="Thiamine-phosphate synthase"/>
    <property type="match status" value="1"/>
</dbReference>
<dbReference type="Gene3D" id="3.20.20.70">
    <property type="entry name" value="Aldolase class I"/>
    <property type="match status" value="1"/>
</dbReference>
<dbReference type="HAMAP" id="MF_00097">
    <property type="entry name" value="TMP_synthase"/>
    <property type="match status" value="1"/>
</dbReference>
<dbReference type="InterPro" id="IPR013785">
    <property type="entry name" value="Aldolase_TIM"/>
</dbReference>
<dbReference type="InterPro" id="IPR036206">
    <property type="entry name" value="ThiamineP_synth_sf"/>
</dbReference>
<dbReference type="InterPro" id="IPR022998">
    <property type="entry name" value="ThiamineP_synth_TenI"/>
</dbReference>
<dbReference type="InterPro" id="IPR034291">
    <property type="entry name" value="TMP_synthase"/>
</dbReference>
<dbReference type="NCBIfam" id="TIGR00693">
    <property type="entry name" value="thiE"/>
    <property type="match status" value="1"/>
</dbReference>
<dbReference type="PANTHER" id="PTHR20857">
    <property type="entry name" value="THIAMINE-PHOSPHATE PYROPHOSPHORYLASE"/>
    <property type="match status" value="1"/>
</dbReference>
<dbReference type="PANTHER" id="PTHR20857:SF15">
    <property type="entry name" value="THIAMINE-PHOSPHATE SYNTHASE"/>
    <property type="match status" value="1"/>
</dbReference>
<dbReference type="Pfam" id="PF02581">
    <property type="entry name" value="TMP-TENI"/>
    <property type="match status" value="1"/>
</dbReference>
<dbReference type="SUPFAM" id="SSF51391">
    <property type="entry name" value="Thiamin phosphate synthase"/>
    <property type="match status" value="1"/>
</dbReference>
<comment type="function">
    <text evidence="1">Condenses 4-methyl-5-(beta-hydroxyethyl)thiazole monophosphate (THZ-P) and 2-methyl-4-amino-5-hydroxymethyl pyrimidine pyrophosphate (HMP-PP) to form thiamine monophosphate (TMP).</text>
</comment>
<comment type="catalytic activity">
    <reaction evidence="1">
        <text>2-[(2R,5Z)-2-carboxy-4-methylthiazol-5(2H)-ylidene]ethyl phosphate + 4-amino-2-methyl-5-(diphosphooxymethyl)pyrimidine + 2 H(+) = thiamine phosphate + CO2 + diphosphate</text>
        <dbReference type="Rhea" id="RHEA:47844"/>
        <dbReference type="ChEBI" id="CHEBI:15378"/>
        <dbReference type="ChEBI" id="CHEBI:16526"/>
        <dbReference type="ChEBI" id="CHEBI:33019"/>
        <dbReference type="ChEBI" id="CHEBI:37575"/>
        <dbReference type="ChEBI" id="CHEBI:57841"/>
        <dbReference type="ChEBI" id="CHEBI:62899"/>
        <dbReference type="EC" id="2.5.1.3"/>
    </reaction>
</comment>
<comment type="catalytic activity">
    <reaction evidence="1">
        <text>2-(2-carboxy-4-methylthiazol-5-yl)ethyl phosphate + 4-amino-2-methyl-5-(diphosphooxymethyl)pyrimidine + 2 H(+) = thiamine phosphate + CO2 + diphosphate</text>
        <dbReference type="Rhea" id="RHEA:47848"/>
        <dbReference type="ChEBI" id="CHEBI:15378"/>
        <dbReference type="ChEBI" id="CHEBI:16526"/>
        <dbReference type="ChEBI" id="CHEBI:33019"/>
        <dbReference type="ChEBI" id="CHEBI:37575"/>
        <dbReference type="ChEBI" id="CHEBI:57841"/>
        <dbReference type="ChEBI" id="CHEBI:62890"/>
        <dbReference type="EC" id="2.5.1.3"/>
    </reaction>
</comment>
<comment type="catalytic activity">
    <reaction evidence="1">
        <text>4-methyl-5-(2-phosphooxyethyl)-thiazole + 4-amino-2-methyl-5-(diphosphooxymethyl)pyrimidine + H(+) = thiamine phosphate + diphosphate</text>
        <dbReference type="Rhea" id="RHEA:22328"/>
        <dbReference type="ChEBI" id="CHEBI:15378"/>
        <dbReference type="ChEBI" id="CHEBI:33019"/>
        <dbReference type="ChEBI" id="CHEBI:37575"/>
        <dbReference type="ChEBI" id="CHEBI:57841"/>
        <dbReference type="ChEBI" id="CHEBI:58296"/>
        <dbReference type="EC" id="2.5.1.3"/>
    </reaction>
</comment>
<comment type="cofactor">
    <cofactor evidence="1">
        <name>Mg(2+)</name>
        <dbReference type="ChEBI" id="CHEBI:18420"/>
    </cofactor>
    <text evidence="1">Binds 1 Mg(2+) ion per subunit.</text>
</comment>
<comment type="pathway">
    <text evidence="1">Cofactor biosynthesis; thiamine diphosphate biosynthesis; thiamine phosphate from 4-amino-2-methyl-5-diphosphomethylpyrimidine and 4-methyl-5-(2-phosphoethyl)-thiazole: step 1/1.</text>
</comment>
<comment type="similarity">
    <text evidence="1">Belongs to the thiamine-phosphate synthase family.</text>
</comment>
<proteinExistence type="inferred from homology"/>
<sequence>MIFDKTMLARYFIMGTQDVADEAEFLRILNQALRSGITLFQYREKGQGALVGQKKLQLAKQVRALTAQYHVPLVIDDDMALAHAIAADGIHFGQDDGRPVDNIKQSGNLFVGVSVSNQQEYQRIAHVAGIDHIGVGPIFATTSKSDAKPPIGISGLSQLIRIAHHPIVAIGGIQRDNLSKVLSTGVDGAAVISMISQSGDIQKTLADWRNRT</sequence>